<keyword id="KW-0091">Biomineralization</keyword>
<keyword id="KW-0130">Cell adhesion</keyword>
<keyword id="KW-0903">Direct protein sequencing</keyword>
<keyword id="KW-0325">Glycoprotein</keyword>
<keyword id="KW-0597">Phosphoprotein</keyword>
<keyword id="KW-1185">Reference proteome</keyword>
<keyword id="KW-0964">Secreted</keyword>
<keyword id="KW-0730">Sialic acid</keyword>
<keyword id="KW-0732">Signal</keyword>
<keyword id="KW-0765">Sulfation</keyword>
<gene>
    <name type="primary">Ibsp</name>
</gene>
<feature type="signal peptide" evidence="3">
    <location>
        <begin position="1"/>
        <end position="16"/>
    </location>
</feature>
<feature type="chain" id="PRO_0000020332" description="Integrin-binding sialoprotein">
    <location>
        <begin position="17"/>
        <end position="320"/>
    </location>
</feature>
<feature type="region of interest" description="Disordered" evidence="4">
    <location>
        <begin position="60"/>
        <end position="117"/>
    </location>
</feature>
<feature type="region of interest" description="Disordered" evidence="4">
    <location>
        <begin position="136"/>
        <end position="225"/>
    </location>
</feature>
<feature type="region of interest" description="Disordered" evidence="4">
    <location>
        <begin position="238"/>
        <end position="264"/>
    </location>
</feature>
<feature type="short sequence motif" description="Integrin-binding motif" evidence="1">
    <location>
        <begin position="289"/>
        <end position="291"/>
    </location>
</feature>
<feature type="compositionally biased region" description="Acidic residues" evidence="4">
    <location>
        <begin position="67"/>
        <end position="106"/>
    </location>
</feature>
<feature type="compositionally biased region" description="Basic and acidic residues" evidence="4">
    <location>
        <begin position="139"/>
        <end position="152"/>
    </location>
</feature>
<feature type="compositionally biased region" description="Acidic residues" evidence="4">
    <location>
        <begin position="153"/>
        <end position="176"/>
    </location>
</feature>
<feature type="compositionally biased region" description="Polar residues" evidence="4">
    <location>
        <begin position="177"/>
        <end position="188"/>
    </location>
</feature>
<feature type="compositionally biased region" description="Polar residues" evidence="4">
    <location>
        <begin position="249"/>
        <end position="261"/>
    </location>
</feature>
<feature type="modified residue" description="Phosphoserine" evidence="2">
    <location>
        <position position="31"/>
    </location>
</feature>
<feature type="modified residue" description="Phosphoserine" evidence="2">
    <location>
        <position position="68"/>
    </location>
</feature>
<feature type="modified residue" description="Phosphoserine" evidence="2">
    <location>
        <position position="76"/>
    </location>
</feature>
<feature type="modified residue" description="Phosphoserine" evidence="2">
    <location>
        <position position="77"/>
    </location>
</feature>
<feature type="modified residue" description="Phosphoserine" evidence="2">
    <location>
        <position position="96"/>
    </location>
</feature>
<feature type="modified residue" description="Phosphoserine" evidence="2">
    <location>
        <position position="153"/>
    </location>
</feature>
<feature type="modified residue" description="Sulfotyrosine" evidence="1">
    <location>
        <position position="316"/>
    </location>
</feature>
<feature type="modified residue" description="Sulfotyrosine" evidence="1">
    <location>
        <position position="317"/>
    </location>
</feature>
<feature type="glycosylation site" description="N-linked (GlcNAc...) asparagine" evidence="3">
    <location>
        <position position="108"/>
    </location>
</feature>
<feature type="glycosylation site" description="N-linked (GlcNAc...) asparagine" evidence="3">
    <location>
        <position position="180"/>
    </location>
</feature>
<feature type="glycosylation site" description="N-linked (GlcNAc...) asparagine" evidence="3">
    <location>
        <position position="185"/>
    </location>
</feature>
<feature type="sequence conflict" description="In Ref. 2; BAA19248." evidence="5" ref="2">
    <location>
        <position position="50"/>
    </location>
</feature>
<feature type="sequence conflict" description="In Ref. 2." evidence="5" ref="2">
    <original>E</original>
    <variation>EEE</variation>
    <location>
        <position position="164"/>
    </location>
</feature>
<feature type="sequence conflict" description="In Ref. 2; BAA19248." evidence="5" ref="2">
    <original>V</original>
    <variation>A</variation>
    <location>
        <position position="221"/>
    </location>
</feature>
<name>SIAL_RAT</name>
<sequence length="320" mass="35251">MKTALILLCILGMASAFSMKNFHRRIKAEDSEENGVFKYRPRYFLYKHATYFYPPLKRFPVQGGSDSSEENGDGDSSEEEGEEEETSNEEENNEDSEGNEDQEAEAENATLSGVTASYGVETTADAGKLELAALQLPKKAGDAEGKAPKMKESDEEEEEEEEEENENEEAEVDENEQVVNGTSTNSTEVDGGNGPSGGDNGEEAEEASVTEAGAEGTTAGVRELTSYGTTTAVLLNGFQQTTPPPEAYGTTSPPARKSSTVEYGEEYEQIGNEYNTAYETYDENNGEPRGDTYRAYEDEYSYYKGHGYEGYEGQDYYYHQ</sequence>
<evidence type="ECO:0000250" key="1">
    <source>
        <dbReference type="UniProtKB" id="P21815"/>
    </source>
</evidence>
<evidence type="ECO:0000250" key="2">
    <source>
        <dbReference type="UniProtKB" id="Q28862"/>
    </source>
</evidence>
<evidence type="ECO:0000255" key="3"/>
<evidence type="ECO:0000256" key="4">
    <source>
        <dbReference type="SAM" id="MobiDB-lite"/>
    </source>
</evidence>
<evidence type="ECO:0000305" key="5"/>
<accession>P13839</accession>
<accession>P97828</accession>
<organism>
    <name type="scientific">Rattus norvegicus</name>
    <name type="common">Rat</name>
    <dbReference type="NCBI Taxonomy" id="10116"/>
    <lineage>
        <taxon>Eukaryota</taxon>
        <taxon>Metazoa</taxon>
        <taxon>Chordata</taxon>
        <taxon>Craniata</taxon>
        <taxon>Vertebrata</taxon>
        <taxon>Euteleostomi</taxon>
        <taxon>Mammalia</taxon>
        <taxon>Eutheria</taxon>
        <taxon>Euarchontoglires</taxon>
        <taxon>Glires</taxon>
        <taxon>Rodentia</taxon>
        <taxon>Myomorpha</taxon>
        <taxon>Muroidea</taxon>
        <taxon>Muridae</taxon>
        <taxon>Murinae</taxon>
        <taxon>Rattus</taxon>
    </lineage>
</organism>
<dbReference type="EMBL" id="J04215">
    <property type="protein sequence ID" value="AAA41763.1"/>
    <property type="molecule type" value="mRNA"/>
</dbReference>
<dbReference type="EMBL" id="AB001383">
    <property type="protein sequence ID" value="BAA19248.1"/>
    <property type="molecule type" value="mRNA"/>
</dbReference>
<dbReference type="PIR" id="A30058">
    <property type="entry name" value="GERTS"/>
</dbReference>
<dbReference type="SMR" id="P13839"/>
<dbReference type="ELM" id="P13839"/>
<dbReference type="FunCoup" id="P13839">
    <property type="interactions" value="2"/>
</dbReference>
<dbReference type="STRING" id="10116.ENSRNOP00000002938"/>
<dbReference type="GlyCosmos" id="P13839">
    <property type="glycosylation" value="3 sites, No reported glycans"/>
</dbReference>
<dbReference type="GlyGen" id="P13839">
    <property type="glycosylation" value="3 sites"/>
</dbReference>
<dbReference type="iPTMnet" id="P13839"/>
<dbReference type="PhosphoSitePlus" id="P13839"/>
<dbReference type="PaxDb" id="10116-ENSRNOP00000002938"/>
<dbReference type="AGR" id="RGD:2855"/>
<dbReference type="RGD" id="2855">
    <property type="gene designation" value="Ibsp"/>
</dbReference>
<dbReference type="eggNOG" id="KOG1181">
    <property type="taxonomic scope" value="Eukaryota"/>
</dbReference>
<dbReference type="InParanoid" id="P13839"/>
<dbReference type="PhylomeDB" id="P13839"/>
<dbReference type="Reactome" id="R-RNO-216083">
    <property type="pathway name" value="Integrin cell surface interactions"/>
</dbReference>
<dbReference type="PRO" id="PR:P13839"/>
<dbReference type="Proteomes" id="UP000002494">
    <property type="component" value="Unplaced"/>
</dbReference>
<dbReference type="GO" id="GO:0005576">
    <property type="term" value="C:extracellular region"/>
    <property type="evidence" value="ECO:0000304"/>
    <property type="project" value="Reactome"/>
</dbReference>
<dbReference type="GO" id="GO:0005615">
    <property type="term" value="C:extracellular space"/>
    <property type="evidence" value="ECO:0000314"/>
    <property type="project" value="RGD"/>
</dbReference>
<dbReference type="GO" id="GO:0031982">
    <property type="term" value="C:vesicle"/>
    <property type="evidence" value="ECO:0000314"/>
    <property type="project" value="RGD"/>
</dbReference>
<dbReference type="GO" id="GO:0005178">
    <property type="term" value="F:integrin binding"/>
    <property type="evidence" value="ECO:0000266"/>
    <property type="project" value="RGD"/>
</dbReference>
<dbReference type="GO" id="GO:0036094">
    <property type="term" value="F:small molecule binding"/>
    <property type="evidence" value="ECO:0000266"/>
    <property type="project" value="RGD"/>
</dbReference>
<dbReference type="GO" id="GO:0030282">
    <property type="term" value="P:bone mineralization"/>
    <property type="evidence" value="ECO:0000266"/>
    <property type="project" value="RGD"/>
</dbReference>
<dbReference type="GO" id="GO:0007155">
    <property type="term" value="P:cell adhesion"/>
    <property type="evidence" value="ECO:0000315"/>
    <property type="project" value="RGD"/>
</dbReference>
<dbReference type="GO" id="GO:0071363">
    <property type="term" value="P:cellular response to growth factor stimulus"/>
    <property type="evidence" value="ECO:0000250"/>
    <property type="project" value="UniProtKB"/>
</dbReference>
<dbReference type="GO" id="GO:0030198">
    <property type="term" value="P:extracellular matrix organization"/>
    <property type="evidence" value="ECO:0000250"/>
    <property type="project" value="UniProtKB"/>
</dbReference>
<dbReference type="GO" id="GO:0001503">
    <property type="term" value="P:ossification"/>
    <property type="evidence" value="ECO:0000304"/>
    <property type="project" value="RGD"/>
</dbReference>
<dbReference type="GO" id="GO:0045785">
    <property type="term" value="P:positive regulation of cell adhesion"/>
    <property type="evidence" value="ECO:0000266"/>
    <property type="project" value="RGD"/>
</dbReference>
<dbReference type="InterPro" id="IPR008412">
    <property type="entry name" value="IBSP"/>
</dbReference>
<dbReference type="PANTHER" id="PTHR10345">
    <property type="entry name" value="BONE SIALOPROTEIN 2"/>
    <property type="match status" value="1"/>
</dbReference>
<dbReference type="PANTHER" id="PTHR10345:SF0">
    <property type="entry name" value="BONE SIALOPROTEIN 2"/>
    <property type="match status" value="1"/>
</dbReference>
<dbReference type="Pfam" id="PF05432">
    <property type="entry name" value="BSP_II"/>
    <property type="match status" value="1"/>
</dbReference>
<reference key="1">
    <citation type="journal article" date="1988" name="J. Biol. Chem.">
        <title>The primary structure of a cell-binding bone sialoprotein.</title>
        <authorList>
            <person name="Oldberg A."/>
            <person name="Franzen A."/>
            <person name="Heinegaard D."/>
        </authorList>
    </citation>
    <scope>NUCLEOTIDE SEQUENCE [MRNA]</scope>
    <scope>PROTEIN SEQUENCE OF 20-45 AND 151-175</scope>
</reference>
<reference key="2">
    <citation type="submission" date="1997-03" db="EMBL/GenBank/DDBJ databases">
        <title>The amino acid sequence of bone sialoprotein from rat bone marrow derived osteoblastic cells.</title>
        <authorList>
            <person name="Yamamoto S."/>
            <person name="Uemura T."/>
        </authorList>
    </citation>
    <scope>NUCLEOTIDE SEQUENCE [MRNA]</scope>
    <source>
        <strain>Wistar</strain>
        <tissue>Bone marrow</tissue>
    </source>
</reference>
<proteinExistence type="evidence at protein level"/>
<protein>
    <recommendedName>
        <fullName evidence="5">Integrin-binding sialoprotein</fullName>
    </recommendedName>
    <alternativeName>
        <fullName evidence="5">Bone sialoprotein 2</fullName>
    </alternativeName>
    <alternativeName>
        <fullName>Bone sialoprotein II</fullName>
        <shortName>BSP II</shortName>
    </alternativeName>
    <alternativeName>
        <fullName>Cell-binding sialoprotein</fullName>
    </alternativeName>
</protein>
<comment type="function">
    <text evidence="1">Binds tightly to hydroxyapatite. Appears to form an integral part of the mineralized matrix. Probably important to cell-matrix interaction. Promotes adhesion and migration of various cells via the alpha-V/beta-3 integrin receptor (ITGAV:ITGB3).</text>
</comment>
<comment type="subunit">
    <text evidence="1 2">Monomer (By similarity). Interacts with integrins; the interaction promotes cell adhesion (By similarity).</text>
</comment>
<comment type="subcellular location">
    <subcellularLocation>
        <location evidence="1">Secreted</location>
    </subcellularLocation>
</comment>
<comment type="domain">
    <text evidence="1">The Arg-Gly-Asp (RGD) sequence serves as an integrin-binding motif and is required for integrin-mediated cell attachment.</text>
</comment>
<comment type="miscellaneous">
    <text>It is possible that the segments of clustered carboxyl groups mediate the strong binding to hydroxyapatite.</text>
</comment>